<evidence type="ECO:0000250" key="1"/>
<evidence type="ECO:0000255" key="2"/>
<evidence type="ECO:0000255" key="3">
    <source>
        <dbReference type="PROSITE-ProRule" id="PRU00143"/>
    </source>
</evidence>
<evidence type="ECO:0000256" key="4">
    <source>
        <dbReference type="SAM" id="MobiDB-lite"/>
    </source>
</evidence>
<evidence type="ECO:0000305" key="5"/>
<accession>Q44879</accession>
<accession>A1URP1</accession>
<accession>P70869</accession>
<keyword id="KW-0378">Hydrolase</keyword>
<keyword id="KW-0645">Protease</keyword>
<keyword id="KW-0964">Secreted</keyword>
<keyword id="KW-0720">Serine protease</keyword>
<keyword id="KW-0732">Signal</keyword>
<comment type="function">
    <text evidence="5">Involved in protection of the bacterium from thermal and osmotic stresses.</text>
</comment>
<comment type="catalytic activity">
    <reaction>
        <text>The enzyme shows specific recognition of a C-terminal tripeptide, Xaa-Yaa-Zaa, in which Xaa is preferably Ala or Leu, Yaa is preferably Ala or Tyr, and Zaa is preferably Ala, but then cleaves at a variable distance from the C-terminus. A typical cleavage is -Ala-Ala-|-Arg-Ala-Ala-Lys-Glu-Asn-Tyr-Ala-Leu-Ala-Ala.</text>
        <dbReference type="EC" id="3.4.21.102"/>
    </reaction>
</comment>
<comment type="subcellular location">
    <subcellularLocation>
        <location evidence="5">Secreted</location>
    </subcellularLocation>
</comment>
<comment type="PTM">
    <text>May undergo autocatalytic processing at the C-terminus (398-434 or 425-434 missing).</text>
</comment>
<comment type="similarity">
    <text evidence="5">Belongs to the peptidase S41A family.</text>
</comment>
<dbReference type="EC" id="3.4.21.102"/>
<dbReference type="EMBL" id="L37094">
    <property type="protein sequence ID" value="AAB61766.1"/>
    <property type="molecule type" value="Genomic_DNA"/>
</dbReference>
<dbReference type="EMBL" id="CP000524">
    <property type="protein sequence ID" value="ABM45226.1"/>
    <property type="molecule type" value="Genomic_DNA"/>
</dbReference>
<dbReference type="EMBL" id="U73652">
    <property type="protein sequence ID" value="AAB18238.1"/>
    <property type="molecule type" value="Genomic_DNA"/>
</dbReference>
<dbReference type="RefSeq" id="WP_005766244.1">
    <property type="nucleotide sequence ID" value="NC_008783.1"/>
</dbReference>
<dbReference type="SMR" id="Q44879"/>
<dbReference type="STRING" id="360095.BARBAKC583_0324"/>
<dbReference type="MEROPS" id="S41.004"/>
<dbReference type="GeneID" id="4684069"/>
<dbReference type="KEGG" id="bbk:BARBAKC583_0324"/>
<dbReference type="PATRIC" id="fig|360095.6.peg.308"/>
<dbReference type="eggNOG" id="COG0793">
    <property type="taxonomic scope" value="Bacteria"/>
</dbReference>
<dbReference type="HOGENOM" id="CLU_017295_3_1_5"/>
<dbReference type="OrthoDB" id="9812068at2"/>
<dbReference type="Proteomes" id="UP000000643">
    <property type="component" value="Chromosome"/>
</dbReference>
<dbReference type="GO" id="GO:0005576">
    <property type="term" value="C:extracellular region"/>
    <property type="evidence" value="ECO:0007669"/>
    <property type="project" value="UniProtKB-SubCell"/>
</dbReference>
<dbReference type="GO" id="GO:0030288">
    <property type="term" value="C:outer membrane-bounded periplasmic space"/>
    <property type="evidence" value="ECO:0007669"/>
    <property type="project" value="TreeGrafter"/>
</dbReference>
<dbReference type="GO" id="GO:0004252">
    <property type="term" value="F:serine-type endopeptidase activity"/>
    <property type="evidence" value="ECO:0007669"/>
    <property type="project" value="UniProtKB-EC"/>
</dbReference>
<dbReference type="GO" id="GO:0006508">
    <property type="term" value="P:proteolysis"/>
    <property type="evidence" value="ECO:0007669"/>
    <property type="project" value="UniProtKB-KW"/>
</dbReference>
<dbReference type="GO" id="GO:0007165">
    <property type="term" value="P:signal transduction"/>
    <property type="evidence" value="ECO:0007669"/>
    <property type="project" value="TreeGrafter"/>
</dbReference>
<dbReference type="CDD" id="cd06782">
    <property type="entry name" value="cpPDZ_CPP-like"/>
    <property type="match status" value="1"/>
</dbReference>
<dbReference type="CDD" id="cd07560">
    <property type="entry name" value="Peptidase_S41_CPP"/>
    <property type="match status" value="1"/>
</dbReference>
<dbReference type="FunFam" id="2.30.42.10:FF:000063">
    <property type="entry name" value="Peptidase, S41 family"/>
    <property type="match status" value="1"/>
</dbReference>
<dbReference type="FunFam" id="3.90.226.10:FF:000029">
    <property type="entry name" value="Peptidase, S41 family"/>
    <property type="match status" value="1"/>
</dbReference>
<dbReference type="Gene3D" id="2.30.42.10">
    <property type="match status" value="1"/>
</dbReference>
<dbReference type="Gene3D" id="3.30.750.44">
    <property type="match status" value="1"/>
</dbReference>
<dbReference type="Gene3D" id="3.90.226.10">
    <property type="entry name" value="2-enoyl-CoA Hydratase, Chain A, domain 1"/>
    <property type="match status" value="1"/>
</dbReference>
<dbReference type="InterPro" id="IPR029045">
    <property type="entry name" value="ClpP/crotonase-like_dom_sf"/>
</dbReference>
<dbReference type="InterPro" id="IPR055210">
    <property type="entry name" value="CtpA/B_N"/>
</dbReference>
<dbReference type="InterPro" id="IPR001478">
    <property type="entry name" value="PDZ"/>
</dbReference>
<dbReference type="InterPro" id="IPR036034">
    <property type="entry name" value="PDZ_sf"/>
</dbReference>
<dbReference type="InterPro" id="IPR004447">
    <property type="entry name" value="Peptidase_S41A"/>
</dbReference>
<dbReference type="InterPro" id="IPR005151">
    <property type="entry name" value="Tail-specific_protease"/>
</dbReference>
<dbReference type="NCBIfam" id="TIGR00225">
    <property type="entry name" value="prc"/>
    <property type="match status" value="1"/>
</dbReference>
<dbReference type="PANTHER" id="PTHR32060:SF30">
    <property type="entry name" value="CARBOXY-TERMINAL PROCESSING PROTEASE CTPA"/>
    <property type="match status" value="1"/>
</dbReference>
<dbReference type="PANTHER" id="PTHR32060">
    <property type="entry name" value="TAIL-SPECIFIC PROTEASE"/>
    <property type="match status" value="1"/>
</dbReference>
<dbReference type="Pfam" id="PF22694">
    <property type="entry name" value="CtpB_N-like"/>
    <property type="match status" value="1"/>
</dbReference>
<dbReference type="Pfam" id="PF13180">
    <property type="entry name" value="PDZ_2"/>
    <property type="match status" value="1"/>
</dbReference>
<dbReference type="Pfam" id="PF03572">
    <property type="entry name" value="Peptidase_S41"/>
    <property type="match status" value="1"/>
</dbReference>
<dbReference type="SMART" id="SM00228">
    <property type="entry name" value="PDZ"/>
    <property type="match status" value="1"/>
</dbReference>
<dbReference type="SMART" id="SM00245">
    <property type="entry name" value="TSPc"/>
    <property type="match status" value="1"/>
</dbReference>
<dbReference type="SUPFAM" id="SSF52096">
    <property type="entry name" value="ClpP/crotonase"/>
    <property type="match status" value="1"/>
</dbReference>
<dbReference type="SUPFAM" id="SSF50156">
    <property type="entry name" value="PDZ domain-like"/>
    <property type="match status" value="1"/>
</dbReference>
<dbReference type="PROSITE" id="PS50106">
    <property type="entry name" value="PDZ"/>
    <property type="match status" value="1"/>
</dbReference>
<feature type="signal peptide" evidence="2">
    <location>
        <begin position="1"/>
        <end position="23"/>
    </location>
</feature>
<feature type="chain" id="PRO_0000027334" description="Carboxy-terminal-processing protease">
    <location>
        <begin position="24"/>
        <end position="434"/>
    </location>
</feature>
<feature type="domain" description="PDZ" evidence="3">
    <location>
        <begin position="86"/>
        <end position="166"/>
    </location>
</feature>
<feature type="region of interest" description="Disordered" evidence="4">
    <location>
        <begin position="383"/>
        <end position="406"/>
    </location>
</feature>
<feature type="compositionally biased region" description="Basic and acidic residues" evidence="4">
    <location>
        <begin position="383"/>
        <end position="392"/>
    </location>
</feature>
<feature type="active site" description="Charge relay system" evidence="1">
    <location>
        <position position="294"/>
    </location>
</feature>
<feature type="active site" description="Charge relay system" evidence="1">
    <location>
        <position position="305"/>
    </location>
</feature>
<feature type="active site" description="Charge relay system" evidence="1">
    <location>
        <position position="319"/>
    </location>
</feature>
<name>CTPA_BARBK</name>
<proteinExistence type="inferred from homology"/>
<organism>
    <name type="scientific">Bartonella bacilliformis (strain ATCC 35685 / KC583 / Herrer 020/F12,63)</name>
    <dbReference type="NCBI Taxonomy" id="360095"/>
    <lineage>
        <taxon>Bacteria</taxon>
        <taxon>Pseudomonadati</taxon>
        <taxon>Pseudomonadota</taxon>
        <taxon>Alphaproteobacteria</taxon>
        <taxon>Hyphomicrobiales</taxon>
        <taxon>Bartonellaceae</taxon>
        <taxon>Bartonella</taxon>
    </lineage>
</organism>
<reference key="1">
    <citation type="journal article" date="1997" name="Microbiology">
        <title>A carboxy-terminal processing protease gene is located immediately upstream of the invasion-associated locus from Bartonella bacilliformis.</title>
        <authorList>
            <person name="Mitchell S.J."/>
            <person name="Minnick M.F."/>
        </authorList>
    </citation>
    <scope>NUCLEOTIDE SEQUENCE [GENOMIC DNA]</scope>
</reference>
<reference key="2">
    <citation type="submission" date="2006-12" db="EMBL/GenBank/DDBJ databases">
        <authorList>
            <person name="Hendrix L."/>
            <person name="Mohamoud Y."/>
            <person name="Radune D."/>
            <person name="Shvartsbeyn A."/>
            <person name="Daugherty S."/>
            <person name="Dodson R."/>
            <person name="Durkin A.S."/>
            <person name="Harkins D."/>
            <person name="Huot H."/>
            <person name="Kothari S.P."/>
            <person name="Madupu R."/>
            <person name="Li J."/>
            <person name="Nelson W.C."/>
            <person name="Shrivastava S."/>
            <person name="Giglio M.G."/>
            <person name="Haft D."/>
            <person name="Selengut J."/>
            <person name="Fraser-Ligget C."/>
            <person name="Seshadri R."/>
        </authorList>
    </citation>
    <scope>NUCLEOTIDE SEQUENCE [LARGE SCALE GENOMIC DNA]</scope>
    <source>
        <strain>ATCC 35685 / KC583 / Herrer 020/F12,63</strain>
    </source>
</reference>
<reference key="3">
    <citation type="submission" date="1996-10" db="EMBL/GenBank/DDBJ databases">
        <title>An alpha-helical coil protein encoded upstream of the invasion locus of Bartonella bacilliformis.</title>
        <authorList>
            <person name="Minnick M.F."/>
            <person name="Mitchell S.J."/>
        </authorList>
    </citation>
    <scope>NUCLEOTIDE SEQUENCE [GENOMIC DNA] OF 1-16</scope>
</reference>
<gene>
    <name type="primary">ctpA</name>
    <name type="ordered locus">BARBAKC583_0324</name>
</gene>
<protein>
    <recommendedName>
        <fullName>Carboxy-terminal-processing protease</fullName>
        <shortName>C-terminal-processing protease</shortName>
        <ecNumber>3.4.21.102</ecNumber>
    </recommendedName>
</protein>
<sequence length="434" mass="47269">MIRKVIFFVAGVFLSASLIVMAQSITTNNEQNTYKQLARFGDIFERVRTQYVTIPDDQKLIENAINGMLLSLDPHSSYMDAEKAKDMRDSTKGEFGGLGIEVTMENNLIKVVSPIDDTPAAKAGVLAGDFISKIDGKQISGQTLNEAVDQMRGPAGTPITLTINRFGVDKPLDIKIVRDIIKVKAVKYRVEGDIGYLRLIQFTEKTFSDLQAAIKDIQSKIPTDKLKGYVLDLRLNPGGLLDQAISVTDAFLNKGEIVSTRGRKQNDVMRFDAKLGDLTDEKPIIVLINGGSASASEIVAGALQDHRRATIIGTQSFGKGSVQTIIPLGENGALRLTTALYYTPSGTSIQGIGITPDIVVEQPLPEKYKGYDVTLGESELRGHIKGKQESDKGSGSAAFVPRDPKDDVQLNEAYKLLRGEITHAAFPPDPNKVF</sequence>